<sequence length="776" mass="84575">MAAIAPAWPLDSLVASSPYWGLREQSFSQAADTLRLVADSPLHLPRGEYLAAWRRGEISAAALETALSETGWTGGAQAWLDAEPRDVDPVPPPRLLAACHREAAGPLSAQSWTDVVIQQISQYCAAWFDRDQANWHLDHERGFYAAWLEQMRHPYGLSALPERREQLRLRAERLPGDAEAMLAAGLAQLQAEPEWLKPWLQALLMRNNGWAAWCAYLGWQAGLKGETDGHLRQLLAIQMAWECLLDDGARGPDSAWAAWHRDWGLRLHGRADPRTLIWQRAHELSLHAPLAQALCRESAAEDGTRPAMQAVFCIDVRSEPLRRALEQTVPASRTYGFAGFFGLPLAYRVPGSDVAQPRLPVLLAPGWEASAAPASKPSAARRGWRAFQRSPLSGFALVESAGLAKLAALAGRSKARGRQAALPQLDPWLTPDSAKPVPRDGLGLERRAEIVSGLLPAMGLAGALAPWVLLVGHASHVSNNPQAAALQCGACGGHGGHQHVRLLAGWLNDPALRERLAALGRAIPADTVFLPALHLTHSDEILLLDADTLSADARARLPGLQAQLRAASALARRRRAPLVGLAPEADDAILLNKMRQKGDDWAETRPEWGLAGNALFIAAPRAKTRKLDLGGRAFLHEYDWRADPDGKGLQAILAAPMVVAHWINMQYFASTADPRRFGSGNKLLHNVVGGRIGVFEGNSGDLRIGLAWQSVHDGQRLRHAPLRLAACIDAPPDRLAEALAAQPVPRQLAENGWLHLYCVHGDTPLRWHADGGWRHD</sequence>
<keyword id="KW-0997">Cell inner membrane</keyword>
<keyword id="KW-1003">Cell membrane</keyword>
<keyword id="KW-0472">Membrane</keyword>
<keyword id="KW-0479">Metal-binding</keyword>
<keyword id="KW-1185">Reference proteome</keyword>
<keyword id="KW-0813">Transport</keyword>
<keyword id="KW-0862">Zinc</keyword>
<comment type="function">
    <text evidence="1">Part of an energy-coupled inorganic carbon pump.</text>
</comment>
<comment type="cofactor">
    <cofactor evidence="1">
        <name>Zn(2+)</name>
        <dbReference type="ChEBI" id="CHEBI:29105"/>
    </cofactor>
</comment>
<comment type="subunit">
    <text evidence="1">Forms a complex with DabB.</text>
</comment>
<comment type="subcellular location">
    <subcellularLocation>
        <location evidence="1">Cell inner membrane</location>
        <topology evidence="1">Peripheral membrane protein</topology>
    </subcellularLocation>
</comment>
<comment type="similarity">
    <text evidence="1">Belongs to the inorganic carbon transporter (TC 9.A.2) DabA family.</text>
</comment>
<dbReference type="EMBL" id="AE016825">
    <property type="protein sequence ID" value="AAQ60886.1"/>
    <property type="molecule type" value="Genomic_DNA"/>
</dbReference>
<dbReference type="SMR" id="Q7NT42"/>
<dbReference type="STRING" id="243365.CV_3220"/>
<dbReference type="KEGG" id="cvi:CV_3220"/>
<dbReference type="eggNOG" id="COG3002">
    <property type="taxonomic scope" value="Bacteria"/>
</dbReference>
<dbReference type="HOGENOM" id="CLU_009885_1_0_4"/>
<dbReference type="Proteomes" id="UP000001424">
    <property type="component" value="Chromosome"/>
</dbReference>
<dbReference type="GO" id="GO:0005886">
    <property type="term" value="C:plasma membrane"/>
    <property type="evidence" value="ECO:0007669"/>
    <property type="project" value="UniProtKB-SubCell"/>
</dbReference>
<dbReference type="GO" id="GO:0008270">
    <property type="term" value="F:zinc ion binding"/>
    <property type="evidence" value="ECO:0007669"/>
    <property type="project" value="UniProtKB-UniRule"/>
</dbReference>
<dbReference type="HAMAP" id="MF_01871">
    <property type="entry name" value="DabA"/>
    <property type="match status" value="1"/>
</dbReference>
<dbReference type="InterPro" id="IPR018752">
    <property type="entry name" value="DabA"/>
</dbReference>
<dbReference type="PANTHER" id="PTHR38344:SF1">
    <property type="entry name" value="INORGANIC CARBON TRANSPORTER SUBUNIT DABA-RELATED"/>
    <property type="match status" value="1"/>
</dbReference>
<dbReference type="PANTHER" id="PTHR38344">
    <property type="entry name" value="UPF0753 PROTEIN AQ_863"/>
    <property type="match status" value="1"/>
</dbReference>
<dbReference type="Pfam" id="PF10070">
    <property type="entry name" value="DabA"/>
    <property type="match status" value="1"/>
</dbReference>
<protein>
    <recommendedName>
        <fullName evidence="1">Probable inorganic carbon transporter subunit DabA</fullName>
    </recommendedName>
</protein>
<accession>Q7NT42</accession>
<gene>
    <name evidence="1" type="primary">dabA</name>
    <name type="ordered locus">CV_3220</name>
</gene>
<evidence type="ECO:0000255" key="1">
    <source>
        <dbReference type="HAMAP-Rule" id="MF_01871"/>
    </source>
</evidence>
<reference key="1">
    <citation type="journal article" date="2003" name="Proc. Natl. Acad. Sci. U.S.A.">
        <title>The complete genome sequence of Chromobacterium violaceum reveals remarkable and exploitable bacterial adaptability.</title>
        <authorList>
            <person name="Vasconcelos A.T.R."/>
            <person name="de Almeida D.F."/>
            <person name="Hungria M."/>
            <person name="Guimaraes C.T."/>
            <person name="Antonio R.V."/>
            <person name="Almeida F.C."/>
            <person name="de Almeida L.G.P."/>
            <person name="de Almeida R."/>
            <person name="Alves-Gomes J.A."/>
            <person name="Andrade E.M."/>
            <person name="Araripe J."/>
            <person name="de Araujo M.F.F."/>
            <person name="Astolfi-Filho S."/>
            <person name="Azevedo V."/>
            <person name="Baptista A.J."/>
            <person name="Bataus L.A.M."/>
            <person name="Batista J.S."/>
            <person name="Belo A."/>
            <person name="van den Berg C."/>
            <person name="Bogo M."/>
            <person name="Bonatto S."/>
            <person name="Bordignon J."/>
            <person name="Brigido M.M."/>
            <person name="Brito C.A."/>
            <person name="Brocchi M."/>
            <person name="Burity H.A."/>
            <person name="Camargo A.A."/>
            <person name="Cardoso D.D.P."/>
            <person name="Carneiro N.P."/>
            <person name="Carraro D.M."/>
            <person name="Carvalho C.M.B."/>
            <person name="Cascardo J.C.M."/>
            <person name="Cavada B.S."/>
            <person name="Chueire L.M.O."/>
            <person name="Creczynski-Pasa T.B."/>
            <person name="Cunha-Junior N.C."/>
            <person name="Fagundes N."/>
            <person name="Falcao C.L."/>
            <person name="Fantinatti F."/>
            <person name="Farias I.P."/>
            <person name="Felipe M.S.S."/>
            <person name="Ferrari L.P."/>
            <person name="Ferro J.A."/>
            <person name="Ferro M.I.T."/>
            <person name="Franco G.R."/>
            <person name="Freitas N.S.A."/>
            <person name="Furlan L.R."/>
            <person name="Gazzinelli R.T."/>
            <person name="Gomes E.A."/>
            <person name="Goncalves P.R."/>
            <person name="Grangeiro T.B."/>
            <person name="Grattapaglia D."/>
            <person name="Grisard E.C."/>
            <person name="Hanna E.S."/>
            <person name="Jardim S.N."/>
            <person name="Laurino J."/>
            <person name="Leoi L.C.T."/>
            <person name="Lima L.F.A."/>
            <person name="Loureiro M.F."/>
            <person name="Lyra M.C.C.P."/>
            <person name="Madeira H.M.F."/>
            <person name="Manfio G.P."/>
            <person name="Maranhao A.Q."/>
            <person name="Martins W.S."/>
            <person name="di Mauro S.M.Z."/>
            <person name="de Medeiros S.R.B."/>
            <person name="Meissner R.V."/>
            <person name="Moreira M.A.M."/>
            <person name="Nascimento F.F."/>
            <person name="Nicolas M.F."/>
            <person name="Oliveira J.G."/>
            <person name="Oliveira S.C."/>
            <person name="Paixao R.F.C."/>
            <person name="Parente J.A."/>
            <person name="Pedrosa F.O."/>
            <person name="Pena S.D.J."/>
            <person name="Pereira J.O."/>
            <person name="Pereira M."/>
            <person name="Pinto L.S.R.C."/>
            <person name="Pinto L.S."/>
            <person name="Porto J.I.R."/>
            <person name="Potrich D.P."/>
            <person name="Ramalho-Neto C.E."/>
            <person name="Reis A.M.M."/>
            <person name="Rigo L.U."/>
            <person name="Rondinelli E."/>
            <person name="Santos E.B.P."/>
            <person name="Santos F.R."/>
            <person name="Schneider M.P.C."/>
            <person name="Seuanez H.N."/>
            <person name="Silva A.M.R."/>
            <person name="da Silva A.L.C."/>
            <person name="Silva D.W."/>
            <person name="Silva R."/>
            <person name="Simoes I.C."/>
            <person name="Simon D."/>
            <person name="Soares C.M.A."/>
            <person name="Soares R.B.A."/>
            <person name="Souza E.M."/>
            <person name="Souza K.R.L."/>
            <person name="Souza R.C."/>
            <person name="Steffens M.B.R."/>
            <person name="Steindel M."/>
            <person name="Teixeira S.R."/>
            <person name="Urmenyi T."/>
            <person name="Vettore A."/>
            <person name="Wassem R."/>
            <person name="Zaha A."/>
            <person name="Simpson A.J.G."/>
        </authorList>
    </citation>
    <scope>NUCLEOTIDE SEQUENCE [LARGE SCALE GENOMIC DNA]</scope>
    <source>
        <strain>ATCC 12472 / DSM 30191 / JCM 1249 / CCUG 213 / NBRC 12614 / NCIMB 9131 / NCTC 9757 / MK</strain>
    </source>
</reference>
<feature type="chain" id="PRO_0000387259" description="Probable inorganic carbon transporter subunit DabA">
    <location>
        <begin position="1"/>
        <end position="776"/>
    </location>
</feature>
<feature type="binding site" evidence="1">
    <location>
        <position position="313"/>
    </location>
    <ligand>
        <name>Zn(2+)</name>
        <dbReference type="ChEBI" id="CHEBI:29105"/>
    </ligand>
</feature>
<feature type="binding site" evidence="1">
    <location>
        <position position="315"/>
    </location>
    <ligand>
        <name>Zn(2+)</name>
        <dbReference type="ChEBI" id="CHEBI:29105"/>
    </ligand>
</feature>
<feature type="binding site" evidence="1">
    <location>
        <position position="473"/>
    </location>
    <ligand>
        <name>Zn(2+)</name>
        <dbReference type="ChEBI" id="CHEBI:29105"/>
    </ligand>
</feature>
<feature type="binding site" evidence="1">
    <location>
        <position position="488"/>
    </location>
    <ligand>
        <name>Zn(2+)</name>
        <dbReference type="ChEBI" id="CHEBI:29105"/>
    </ligand>
</feature>
<proteinExistence type="inferred from homology"/>
<name>DABA_CHRVO</name>
<organism>
    <name type="scientific">Chromobacterium violaceum (strain ATCC 12472 / DSM 30191 / JCM 1249 / CCUG 213 / NBRC 12614 / NCIMB 9131 / NCTC 9757 / MK)</name>
    <dbReference type="NCBI Taxonomy" id="243365"/>
    <lineage>
        <taxon>Bacteria</taxon>
        <taxon>Pseudomonadati</taxon>
        <taxon>Pseudomonadota</taxon>
        <taxon>Betaproteobacteria</taxon>
        <taxon>Neisseriales</taxon>
        <taxon>Chromobacteriaceae</taxon>
        <taxon>Chromobacterium</taxon>
    </lineage>
</organism>